<dbReference type="EMBL" id="AF001434">
    <property type="protein sequence ID" value="AAB81204.1"/>
    <property type="molecule type" value="mRNA"/>
</dbReference>
<dbReference type="EMBL" id="AF099011">
    <property type="protein sequence ID" value="AAD45866.1"/>
    <property type="molecule type" value="mRNA"/>
</dbReference>
<dbReference type="EMBL" id="AY007161">
    <property type="protein sequence ID" value="AAG02009.1"/>
    <property type="molecule type" value="mRNA"/>
</dbReference>
<dbReference type="EMBL" id="BC104799">
    <property type="protein sequence ID" value="AAI04800.1"/>
    <property type="molecule type" value="mRNA"/>
</dbReference>
<dbReference type="EMBL" id="BC104825">
    <property type="protein sequence ID" value="AAI04826.1"/>
    <property type="molecule type" value="mRNA"/>
</dbReference>
<dbReference type="CCDS" id="CCDS8084.1"/>
<dbReference type="RefSeq" id="NP_001269373.1">
    <property type="nucleotide sequence ID" value="NM_001282444.2"/>
</dbReference>
<dbReference type="RefSeq" id="NP_001269374.1">
    <property type="nucleotide sequence ID" value="NM_001282445.1"/>
</dbReference>
<dbReference type="RefSeq" id="NP_006786.2">
    <property type="nucleotide sequence ID" value="NM_006795.3"/>
</dbReference>
<dbReference type="RefSeq" id="XP_011543041.1">
    <property type="nucleotide sequence ID" value="XM_011544739.1"/>
</dbReference>
<dbReference type="PDB" id="2JQ6">
    <property type="method" value="NMR"/>
    <property type="chains" value="A=401-534"/>
</dbReference>
<dbReference type="PDB" id="2KFF">
    <property type="method" value="NMR"/>
    <property type="chains" value="A=435-534"/>
</dbReference>
<dbReference type="PDB" id="2KFG">
    <property type="method" value="NMR"/>
    <property type="chains" value="A=435-534"/>
</dbReference>
<dbReference type="PDB" id="2KFH">
    <property type="method" value="NMR"/>
    <property type="chains" value="A=435-534"/>
</dbReference>
<dbReference type="PDB" id="2KSP">
    <property type="method" value="NMR"/>
    <property type="chains" value="A=435-534"/>
</dbReference>
<dbReference type="PDBsum" id="2JQ6"/>
<dbReference type="PDBsum" id="2KFF"/>
<dbReference type="PDBsum" id="2KFG"/>
<dbReference type="PDBsum" id="2KFH"/>
<dbReference type="PDBsum" id="2KSP"/>
<dbReference type="BMRB" id="Q9H4M9"/>
<dbReference type="SMR" id="Q9H4M9"/>
<dbReference type="BioGRID" id="116138">
    <property type="interactions" value="183"/>
</dbReference>
<dbReference type="FunCoup" id="Q9H4M9">
    <property type="interactions" value="1722"/>
</dbReference>
<dbReference type="IntAct" id="Q9H4M9">
    <property type="interactions" value="74"/>
</dbReference>
<dbReference type="MINT" id="Q9H4M9"/>
<dbReference type="STRING" id="9606.ENSP00000479153"/>
<dbReference type="BindingDB" id="Q9H4M9"/>
<dbReference type="ChEMBL" id="CHEMBL4295942"/>
<dbReference type="TCDB" id="1.F.3.1.1">
    <property type="family name" value="the eh domain-containing protein 1 (etmp1) family"/>
</dbReference>
<dbReference type="GlyGen" id="Q9H4M9">
    <property type="glycosylation" value="1 site, 1 O-linked glycan (1 site)"/>
</dbReference>
<dbReference type="iPTMnet" id="Q9H4M9"/>
<dbReference type="MetOSite" id="Q9H4M9"/>
<dbReference type="PhosphoSitePlus" id="Q9H4M9"/>
<dbReference type="SwissPalm" id="Q9H4M9"/>
<dbReference type="BioMuta" id="EHD1"/>
<dbReference type="DMDM" id="18202945"/>
<dbReference type="CPTAC" id="CPTAC-68"/>
<dbReference type="CPTAC" id="CPTAC-69"/>
<dbReference type="jPOST" id="Q9H4M9"/>
<dbReference type="MassIVE" id="Q9H4M9"/>
<dbReference type="PaxDb" id="9606-ENSP00000479153"/>
<dbReference type="PeptideAtlas" id="Q9H4M9"/>
<dbReference type="PRIDE" id="Q9H4M9"/>
<dbReference type="ProteomicsDB" id="80867"/>
<dbReference type="Pumba" id="Q9H4M9"/>
<dbReference type="Antibodypedia" id="44098">
    <property type="antibodies" value="189 antibodies from 30 providers"/>
</dbReference>
<dbReference type="DNASU" id="10938"/>
<dbReference type="Ensembl" id="ENST00000320631.8">
    <property type="protein sequence ID" value="ENSP00000320516.3"/>
    <property type="gene ID" value="ENSG00000110047.18"/>
</dbReference>
<dbReference type="Ensembl" id="ENST00000359393.6">
    <property type="protein sequence ID" value="ENSP00000352354.2"/>
    <property type="gene ID" value="ENSG00000110047.18"/>
</dbReference>
<dbReference type="GeneID" id="10938"/>
<dbReference type="KEGG" id="hsa:10938"/>
<dbReference type="MANE-Select" id="ENST00000320631.8">
    <property type="protein sequence ID" value="ENSP00000320516.3"/>
    <property type="RefSeq nucleotide sequence ID" value="NM_006795.4"/>
    <property type="RefSeq protein sequence ID" value="NP_006786.2"/>
</dbReference>
<dbReference type="UCSC" id="uc001obu.3">
    <property type="organism name" value="human"/>
</dbReference>
<dbReference type="AGR" id="HGNC:3242"/>
<dbReference type="CTD" id="10938"/>
<dbReference type="DisGeNET" id="10938"/>
<dbReference type="GeneCards" id="EHD1"/>
<dbReference type="HGNC" id="HGNC:3242">
    <property type="gene designation" value="EHD1"/>
</dbReference>
<dbReference type="HPA" id="ENSG00000110047">
    <property type="expression patterns" value="Tissue enhanced (bone marrow, testis)"/>
</dbReference>
<dbReference type="MIM" id="605888">
    <property type="type" value="gene"/>
</dbReference>
<dbReference type="neXtProt" id="NX_Q9H4M9"/>
<dbReference type="OpenTargets" id="ENSG00000110047"/>
<dbReference type="PharmGKB" id="PA27677"/>
<dbReference type="VEuPathDB" id="HostDB:ENSG00000110047"/>
<dbReference type="eggNOG" id="KOG1954">
    <property type="taxonomic scope" value="Eukaryota"/>
</dbReference>
<dbReference type="GeneTree" id="ENSGT00940000158249"/>
<dbReference type="HOGENOM" id="CLU_017595_1_1_1"/>
<dbReference type="InParanoid" id="Q9H4M9"/>
<dbReference type="OMA" id="PFLKVHK"/>
<dbReference type="OrthoDB" id="1716625at2759"/>
<dbReference type="PAN-GO" id="Q9H4M9">
    <property type="GO annotations" value="10 GO annotations based on evolutionary models"/>
</dbReference>
<dbReference type="PhylomeDB" id="Q9H4M9"/>
<dbReference type="TreeFam" id="TF314429"/>
<dbReference type="PathwayCommons" id="Q9H4M9"/>
<dbReference type="Reactome" id="R-HSA-983231">
    <property type="pathway name" value="Factors involved in megakaryocyte development and platelet production"/>
</dbReference>
<dbReference type="SignaLink" id="Q9H4M9"/>
<dbReference type="BioGRID-ORCS" id="10938">
    <property type="hits" value="18 hits in 1158 CRISPR screens"/>
</dbReference>
<dbReference type="CD-CODE" id="91857CE7">
    <property type="entry name" value="Nucleolus"/>
</dbReference>
<dbReference type="CD-CODE" id="FB4E32DD">
    <property type="entry name" value="Presynaptic clusters and postsynaptic densities"/>
</dbReference>
<dbReference type="ChiTaRS" id="EHD1">
    <property type="organism name" value="human"/>
</dbReference>
<dbReference type="EvolutionaryTrace" id="Q9H4M9"/>
<dbReference type="GeneWiki" id="EHD1"/>
<dbReference type="GenomeRNAi" id="10938"/>
<dbReference type="Pharos" id="Q9H4M9">
    <property type="development level" value="Tbio"/>
</dbReference>
<dbReference type="PRO" id="PR:Q9H4M9"/>
<dbReference type="Proteomes" id="UP000005640">
    <property type="component" value="Chromosome 11"/>
</dbReference>
<dbReference type="RNAct" id="Q9H4M9">
    <property type="molecule type" value="protein"/>
</dbReference>
<dbReference type="Bgee" id="ENSG00000110047">
    <property type="expression patterns" value="Expressed in left testis and 200 other cell types or tissues"/>
</dbReference>
<dbReference type="ExpressionAtlas" id="Q9H4M9">
    <property type="expression patterns" value="baseline and differential"/>
</dbReference>
<dbReference type="GO" id="GO:0020018">
    <property type="term" value="C:ciliary pocket membrane"/>
    <property type="evidence" value="ECO:0000314"/>
    <property type="project" value="UniProtKB"/>
</dbReference>
<dbReference type="GO" id="GO:0005929">
    <property type="term" value="C:cilium"/>
    <property type="evidence" value="ECO:0000314"/>
    <property type="project" value="UniProtKB"/>
</dbReference>
<dbReference type="GO" id="GO:0005737">
    <property type="term" value="C:cytoplasm"/>
    <property type="evidence" value="ECO:0000318"/>
    <property type="project" value="GO_Central"/>
</dbReference>
<dbReference type="GO" id="GO:0005769">
    <property type="term" value="C:early endosome"/>
    <property type="evidence" value="ECO:0000318"/>
    <property type="project" value="GO_Central"/>
</dbReference>
<dbReference type="GO" id="GO:0031901">
    <property type="term" value="C:early endosome membrane"/>
    <property type="evidence" value="ECO:0000314"/>
    <property type="project" value="UniProtKB"/>
</dbReference>
<dbReference type="GO" id="GO:0030139">
    <property type="term" value="C:endocytic vesicle"/>
    <property type="evidence" value="ECO:0000318"/>
    <property type="project" value="GO_Central"/>
</dbReference>
<dbReference type="GO" id="GO:0010008">
    <property type="term" value="C:endosome membrane"/>
    <property type="evidence" value="ECO:0000250"/>
    <property type="project" value="UniProtKB"/>
</dbReference>
<dbReference type="GO" id="GO:0070062">
    <property type="term" value="C:extracellular exosome"/>
    <property type="evidence" value="ECO:0007005"/>
    <property type="project" value="UniProtKB"/>
</dbReference>
<dbReference type="GO" id="GO:0098978">
    <property type="term" value="C:glutamatergic synapse"/>
    <property type="evidence" value="ECO:0007669"/>
    <property type="project" value="Ensembl"/>
</dbReference>
<dbReference type="GO" id="GO:0005811">
    <property type="term" value="C:lipid droplet"/>
    <property type="evidence" value="ECO:0000250"/>
    <property type="project" value="BHF-UCL"/>
</dbReference>
<dbReference type="GO" id="GO:0016020">
    <property type="term" value="C:membrane"/>
    <property type="evidence" value="ECO:0007005"/>
    <property type="project" value="UniProtKB"/>
</dbReference>
<dbReference type="GO" id="GO:0048471">
    <property type="term" value="C:perinuclear region of cytoplasm"/>
    <property type="evidence" value="ECO:0000318"/>
    <property type="project" value="GO_Central"/>
</dbReference>
<dbReference type="GO" id="GO:0005886">
    <property type="term" value="C:plasma membrane"/>
    <property type="evidence" value="ECO:0000250"/>
    <property type="project" value="UniProtKB"/>
</dbReference>
<dbReference type="GO" id="GO:0031095">
    <property type="term" value="C:platelet dense tubular network membrane"/>
    <property type="evidence" value="ECO:0000250"/>
    <property type="project" value="BHF-UCL"/>
</dbReference>
<dbReference type="GO" id="GO:0048786">
    <property type="term" value="C:presynaptic active zone"/>
    <property type="evidence" value="ECO:0007669"/>
    <property type="project" value="Ensembl"/>
</dbReference>
<dbReference type="GO" id="GO:0055038">
    <property type="term" value="C:recycling endosome membrane"/>
    <property type="evidence" value="ECO:0000314"/>
    <property type="project" value="UniProtKB"/>
</dbReference>
<dbReference type="GO" id="GO:0005524">
    <property type="term" value="F:ATP binding"/>
    <property type="evidence" value="ECO:0007669"/>
    <property type="project" value="UniProtKB-KW"/>
</dbReference>
<dbReference type="GO" id="GO:0045296">
    <property type="term" value="F:cadherin binding"/>
    <property type="evidence" value="ECO:0007005"/>
    <property type="project" value="BHF-UCL"/>
</dbReference>
<dbReference type="GO" id="GO:0005509">
    <property type="term" value="F:calcium ion binding"/>
    <property type="evidence" value="ECO:0007669"/>
    <property type="project" value="InterPro"/>
</dbReference>
<dbReference type="GO" id="GO:0005525">
    <property type="term" value="F:GTP binding"/>
    <property type="evidence" value="ECO:0007669"/>
    <property type="project" value="InterPro"/>
</dbReference>
<dbReference type="GO" id="GO:0042802">
    <property type="term" value="F:identical protein binding"/>
    <property type="evidence" value="ECO:0000353"/>
    <property type="project" value="IntAct"/>
</dbReference>
<dbReference type="GO" id="GO:0031267">
    <property type="term" value="F:small GTPase binding"/>
    <property type="evidence" value="ECO:0000353"/>
    <property type="project" value="UniProtKB"/>
</dbReference>
<dbReference type="GO" id="GO:1990090">
    <property type="term" value="P:cellular response to nerve growth factor stimulus"/>
    <property type="evidence" value="ECO:0000250"/>
    <property type="project" value="UniProtKB"/>
</dbReference>
<dbReference type="GO" id="GO:0042632">
    <property type="term" value="P:cholesterol homeostasis"/>
    <property type="evidence" value="ECO:0000250"/>
    <property type="project" value="BHF-UCL"/>
</dbReference>
<dbReference type="GO" id="GO:0060271">
    <property type="term" value="P:cilium assembly"/>
    <property type="evidence" value="ECO:0000314"/>
    <property type="project" value="UniProtKB"/>
</dbReference>
<dbReference type="GO" id="GO:0032456">
    <property type="term" value="P:endocytic recycling"/>
    <property type="evidence" value="ECO:0000315"/>
    <property type="project" value="UniProtKB"/>
</dbReference>
<dbReference type="GO" id="GO:0006897">
    <property type="term" value="P:endocytosis"/>
    <property type="evidence" value="ECO:0000315"/>
    <property type="project" value="UniProtKB"/>
</dbReference>
<dbReference type="GO" id="GO:0006886">
    <property type="term" value="P:intracellular protein transport"/>
    <property type="evidence" value="ECO:0000315"/>
    <property type="project" value="UniProtKB"/>
</dbReference>
<dbReference type="GO" id="GO:0034383">
    <property type="term" value="P:low-density lipoprotein particle clearance"/>
    <property type="evidence" value="ECO:0000250"/>
    <property type="project" value="BHF-UCL"/>
</dbReference>
<dbReference type="GO" id="GO:0031175">
    <property type="term" value="P:neuron projection development"/>
    <property type="evidence" value="ECO:0000250"/>
    <property type="project" value="UniProtKB"/>
</dbReference>
<dbReference type="GO" id="GO:0010886">
    <property type="term" value="P:positive regulation of cholesterol storage"/>
    <property type="evidence" value="ECO:0000250"/>
    <property type="project" value="BHF-UCL"/>
</dbReference>
<dbReference type="GO" id="GO:2001137">
    <property type="term" value="P:positive regulation of endocytic recycling"/>
    <property type="evidence" value="ECO:0000250"/>
    <property type="project" value="UniProtKB"/>
</dbReference>
<dbReference type="GO" id="GO:1901741">
    <property type="term" value="P:positive regulation of myoblast fusion"/>
    <property type="evidence" value="ECO:0000250"/>
    <property type="project" value="UniProtKB"/>
</dbReference>
<dbReference type="GO" id="GO:0010976">
    <property type="term" value="P:positive regulation of neuron projection development"/>
    <property type="evidence" value="ECO:0007669"/>
    <property type="project" value="Ensembl"/>
</dbReference>
<dbReference type="GO" id="GO:0051260">
    <property type="term" value="P:protein homooligomerization"/>
    <property type="evidence" value="ECO:0000353"/>
    <property type="project" value="UniProtKB"/>
</dbReference>
<dbReference type="GO" id="GO:0061512">
    <property type="term" value="P:protein localization to cilium"/>
    <property type="evidence" value="ECO:0000315"/>
    <property type="project" value="UniProtKB"/>
</dbReference>
<dbReference type="GO" id="GO:0072659">
    <property type="term" value="P:protein localization to plasma membrane"/>
    <property type="evidence" value="ECO:0000318"/>
    <property type="project" value="GO_Central"/>
</dbReference>
<dbReference type="CDD" id="cd00052">
    <property type="entry name" value="EH"/>
    <property type="match status" value="1"/>
</dbReference>
<dbReference type="CDD" id="cd09913">
    <property type="entry name" value="EHD"/>
    <property type="match status" value="1"/>
</dbReference>
<dbReference type="FunFam" id="3.40.50.300:FF:000147">
    <property type="entry name" value="EH domain-containing protein 1"/>
    <property type="match status" value="1"/>
</dbReference>
<dbReference type="FunFam" id="1.10.238.10:FF:000038">
    <property type="entry name" value="EH domain-containing protein 3"/>
    <property type="match status" value="1"/>
</dbReference>
<dbReference type="Gene3D" id="1.10.268.20">
    <property type="match status" value="1"/>
</dbReference>
<dbReference type="Gene3D" id="1.10.238.10">
    <property type="entry name" value="EF-hand"/>
    <property type="match status" value="1"/>
</dbReference>
<dbReference type="Gene3D" id="3.40.50.300">
    <property type="entry name" value="P-loop containing nucleotide triphosphate hydrolases"/>
    <property type="match status" value="1"/>
</dbReference>
<dbReference type="InterPro" id="IPR040990">
    <property type="entry name" value="DUF5600"/>
</dbReference>
<dbReference type="InterPro" id="IPR045063">
    <property type="entry name" value="Dynamin_N"/>
</dbReference>
<dbReference type="InterPro" id="IPR011992">
    <property type="entry name" value="EF-hand-dom_pair"/>
</dbReference>
<dbReference type="InterPro" id="IPR018247">
    <property type="entry name" value="EF_Hand_1_Ca_BS"/>
</dbReference>
<dbReference type="InterPro" id="IPR002048">
    <property type="entry name" value="EF_hand_dom"/>
</dbReference>
<dbReference type="InterPro" id="IPR000261">
    <property type="entry name" value="EH_dom"/>
</dbReference>
<dbReference type="InterPro" id="IPR031692">
    <property type="entry name" value="EHD_N"/>
</dbReference>
<dbReference type="InterPro" id="IPR030381">
    <property type="entry name" value="G_DYNAMIN_dom"/>
</dbReference>
<dbReference type="InterPro" id="IPR027417">
    <property type="entry name" value="P-loop_NTPase"/>
</dbReference>
<dbReference type="PANTHER" id="PTHR11216:SF170">
    <property type="entry name" value="DYNAMIN ASSOCIATED PROTEIN 160, ISOFORM D"/>
    <property type="match status" value="1"/>
</dbReference>
<dbReference type="PANTHER" id="PTHR11216">
    <property type="entry name" value="EH DOMAIN"/>
    <property type="match status" value="1"/>
</dbReference>
<dbReference type="Pfam" id="PF18150">
    <property type="entry name" value="DUF5600"/>
    <property type="match status" value="1"/>
</dbReference>
<dbReference type="Pfam" id="PF00350">
    <property type="entry name" value="Dynamin_N"/>
    <property type="match status" value="1"/>
</dbReference>
<dbReference type="Pfam" id="PF12763">
    <property type="entry name" value="EH"/>
    <property type="match status" value="1"/>
</dbReference>
<dbReference type="Pfam" id="PF16880">
    <property type="entry name" value="EHD_N"/>
    <property type="match status" value="1"/>
</dbReference>
<dbReference type="SMART" id="SM00027">
    <property type="entry name" value="EH"/>
    <property type="match status" value="1"/>
</dbReference>
<dbReference type="SUPFAM" id="SSF47473">
    <property type="entry name" value="EF-hand"/>
    <property type="match status" value="1"/>
</dbReference>
<dbReference type="SUPFAM" id="SSF52540">
    <property type="entry name" value="P-loop containing nucleoside triphosphate hydrolases"/>
    <property type="match status" value="1"/>
</dbReference>
<dbReference type="PROSITE" id="PS00018">
    <property type="entry name" value="EF_HAND_1"/>
    <property type="match status" value="1"/>
</dbReference>
<dbReference type="PROSITE" id="PS50222">
    <property type="entry name" value="EF_HAND_2"/>
    <property type="match status" value="1"/>
</dbReference>
<dbReference type="PROSITE" id="PS50031">
    <property type="entry name" value="EH"/>
    <property type="match status" value="1"/>
</dbReference>
<dbReference type="PROSITE" id="PS51718">
    <property type="entry name" value="G_DYNAMIN_2"/>
    <property type="match status" value="1"/>
</dbReference>
<keyword id="KW-0002">3D-structure</keyword>
<keyword id="KW-0007">Acetylation</keyword>
<keyword id="KW-0067">ATP-binding</keyword>
<keyword id="KW-0106">Calcium</keyword>
<keyword id="KW-1003">Cell membrane</keyword>
<keyword id="KW-0966">Cell projection</keyword>
<keyword id="KW-0969">Cilium</keyword>
<keyword id="KW-0970">Cilium biogenesis/degradation</keyword>
<keyword id="KW-0175">Coiled coil</keyword>
<keyword id="KW-0903">Direct protein sequencing</keyword>
<keyword id="KW-0967">Endosome</keyword>
<keyword id="KW-0472">Membrane</keyword>
<keyword id="KW-0479">Metal-binding</keyword>
<keyword id="KW-0547">Nucleotide-binding</keyword>
<keyword id="KW-0597">Phosphoprotein</keyword>
<keyword id="KW-0653">Protein transport</keyword>
<keyword id="KW-1267">Proteomics identification</keyword>
<keyword id="KW-1185">Reference proteome</keyword>
<keyword id="KW-0813">Transport</keyword>
<evidence type="ECO:0000250" key="1">
    <source>
        <dbReference type="UniProtKB" id="Q641Z6"/>
    </source>
</evidence>
<evidence type="ECO:0000250" key="2">
    <source>
        <dbReference type="UniProtKB" id="Q8BH64"/>
    </source>
</evidence>
<evidence type="ECO:0000250" key="3">
    <source>
        <dbReference type="UniProtKB" id="Q9WVK4"/>
    </source>
</evidence>
<evidence type="ECO:0000255" key="4"/>
<evidence type="ECO:0000255" key="5">
    <source>
        <dbReference type="PROSITE-ProRule" id="PRU00077"/>
    </source>
</evidence>
<evidence type="ECO:0000255" key="6">
    <source>
        <dbReference type="PROSITE-ProRule" id="PRU00448"/>
    </source>
</evidence>
<evidence type="ECO:0000255" key="7">
    <source>
        <dbReference type="PROSITE-ProRule" id="PRU01055"/>
    </source>
</evidence>
<evidence type="ECO:0000269" key="8">
    <source>
    </source>
</evidence>
<evidence type="ECO:0000269" key="9">
    <source>
    </source>
</evidence>
<evidence type="ECO:0000269" key="10">
    <source>
    </source>
</evidence>
<evidence type="ECO:0000269" key="11">
    <source>
    </source>
</evidence>
<evidence type="ECO:0000269" key="12">
    <source>
    </source>
</evidence>
<evidence type="ECO:0000269" key="13">
    <source>
    </source>
</evidence>
<evidence type="ECO:0000269" key="14">
    <source>
    </source>
</evidence>
<evidence type="ECO:0000269" key="15">
    <source>
    </source>
</evidence>
<evidence type="ECO:0000269" key="16">
    <source>
    </source>
</evidence>
<evidence type="ECO:0000269" key="17">
    <source>
    </source>
</evidence>
<evidence type="ECO:0000269" key="18">
    <source>
    </source>
</evidence>
<evidence type="ECO:0000269" key="19">
    <source>
    </source>
</evidence>
<evidence type="ECO:0000269" key="20">
    <source>
    </source>
</evidence>
<evidence type="ECO:0000303" key="21">
    <source>
    </source>
</evidence>
<evidence type="ECO:0000305" key="22"/>
<evidence type="ECO:0000305" key="23">
    <source>
    </source>
</evidence>
<evidence type="ECO:0000312" key="24">
    <source>
        <dbReference type="EMBL" id="AAD45866.1"/>
    </source>
</evidence>
<evidence type="ECO:0000312" key="25">
    <source>
        <dbReference type="HGNC" id="HGNC:3242"/>
    </source>
</evidence>
<evidence type="ECO:0007744" key="26">
    <source>
        <dbReference type="PDB" id="2KFG"/>
    </source>
</evidence>
<evidence type="ECO:0007744" key="27">
    <source>
        <dbReference type="PDB" id="2KFH"/>
    </source>
</evidence>
<evidence type="ECO:0007744" key="28">
    <source>
    </source>
</evidence>
<evidence type="ECO:0007744" key="29">
    <source>
    </source>
</evidence>
<evidence type="ECO:0007744" key="30">
    <source>
    </source>
</evidence>
<evidence type="ECO:0007744" key="31">
    <source>
    </source>
</evidence>
<evidence type="ECO:0007744" key="32">
    <source>
    </source>
</evidence>
<evidence type="ECO:0007744" key="33">
    <source>
    </source>
</evidence>
<evidence type="ECO:0007744" key="34">
    <source>
    </source>
</evidence>
<evidence type="ECO:0007829" key="35">
    <source>
        <dbReference type="PDB" id="2JQ6"/>
    </source>
</evidence>
<evidence type="ECO:0007829" key="36">
    <source>
        <dbReference type="PDB" id="2KFF"/>
    </source>
</evidence>
<comment type="function">
    <text evidence="1 3 9 11 16 18 19 20">ATP- and membrane-binding protein that controls membrane reorganization/tubulation upon ATP hydrolysis. In vitro causes vesiculation of endocytic membranes (PubMed:24019528). Acts in early endocytic membrane fusion and membrane trafficking of recycling endosomes (PubMed:15020713, PubMed:17233914, PubMed:20801876). Recruited to endosomal membranes upon nerve growth factor stimulation, indirectly regulates neurite outgrowth (By similarity). Plays a role in myoblast fusion (By similarity). Involved in the unidirectional retrograde dendritic transport of endocytosed BACE1 and in efficient sorting of BACE1 to axons implicating a function in neuronal APP processing (By similarity). Plays a role in the formation of the ciliary vesicle (CV), an early step in cilium biogenesis (PubMed:31615969). Proposed to be required for the fusion of distal appendage vesicles (DAVs) to form the CV by recruiting SNARE complex component SNAP29. Is required for recruitment of transition zone proteins CEP290, RPGRIP1L, TMEM67 and B9D2, and of IFT20 following DAV reorganization before Rab8-dependent ciliary membrane extension. Required for the loss of CCP110 form the mother centriole essential for the maturation of the basal body during ciliogenesis (PubMed:25686250).</text>
</comment>
<comment type="subunit">
    <text evidence="3 9 10 11 12 13 14 15 17 20">Homooligomer, and heterooligomer with EHD2, EHD3 and EHD4, ATP-binding is required for heterooligomerization (PubMed:16251358, PubMed:17233914, PubMed:18331452, PubMed:31615969). Interacts (via EH domain) with MICALL1 (via NPF1 motif); the interaction is direct and recruits EHD1 to membranes (PubMed:19864458, PubMed:20106972). Interacts with RAB35; the interaction is indirect through MICALL1 and recruits EHD1 to membranes (By similarity). Interacts (via EH domain) with PACSIN2 (via NPF motifs); regulates localization to tubular recycling endosome membranes (PubMed:23596323). Interacts with PACSIN1 (By similarity). Interacts with RAB8A (PubMed:19864458). Interacts with FER1L5 (via second C2 domain) (By similarity). Interacts with MYOF (By similarity). Interacts with ZFYVE20 (PubMed:15020713). Interacts (via EH domain) with RAB11FIP2 (PubMed:16251358).</text>
</comment>
<comment type="interaction">
    <interactant intactId="EBI-490691">
        <id>Q9H4M9</id>
    </interactant>
    <interactant intactId="EBI-2513908">
        <id>Q9P2R3</id>
        <label>ANKFY1</label>
    </interactant>
    <organismsDiffer>false</organismsDiffer>
    <experiments>8</experiments>
</comment>
<comment type="interaction">
    <interactant intactId="EBI-490691">
        <id>Q9H4M9</id>
    </interactant>
    <interactant intactId="EBI-490691">
        <id>Q9H4M9</id>
        <label>EHD1</label>
    </interactant>
    <organismsDiffer>false</organismsDiffer>
    <experiments>4</experiments>
</comment>
<comment type="interaction">
    <interactant intactId="EBI-490691">
        <id>Q9H4M9</id>
    </interactant>
    <interactant intactId="EBI-2870749">
        <id>Q9NZN3</id>
        <label>EHD3</label>
    </interactant>
    <organismsDiffer>false</organismsDiffer>
    <experiments>9</experiments>
</comment>
<comment type="interaction">
    <interactant intactId="EBI-490691">
        <id>Q9H4M9</id>
    </interactant>
    <interactant intactId="EBI-1056885">
        <id>Q8N3F8</id>
        <label>MICALL1</label>
    </interactant>
    <organismsDiffer>false</organismsDiffer>
    <experiments>13</experiments>
</comment>
<comment type="interaction">
    <interactant intactId="EBI-490691">
        <id>Q9H4M9</id>
    </interactant>
    <interactant intactId="EBI-1105310">
        <id>Q9H1K0</id>
        <label>RBSN</label>
    </interactant>
    <organismsDiffer>false</organismsDiffer>
    <experiments>6</experiments>
</comment>
<comment type="interaction">
    <interactant intactId="EBI-490691">
        <id>Q9H4M9</id>
    </interactant>
    <interactant intactId="EBI-490676">
        <id>O95721</id>
        <label>SNAP29</label>
    </interactant>
    <organismsDiffer>false</organismsDiffer>
    <experiments>4</experiments>
</comment>
<comment type="interaction">
    <interactant intactId="EBI-490691">
        <id>Q9H4M9</id>
    </interactant>
    <interactant intactId="EBI-775304">
        <id>Q9QXY6</id>
        <label>Ehd3</label>
    </interactant>
    <organismsDiffer>true</organismsDiffer>
    <experiments>7</experiments>
</comment>
<comment type="interaction">
    <interactant intactId="EBI-490691">
        <id>Q9H4M9</id>
    </interactant>
    <interactant intactId="EBI-56887239">
        <id>A0A3Q1LK78</id>
        <label>RBSN</label>
    </interactant>
    <organismsDiffer>true</organismsDiffer>
    <experiments>2</experiments>
</comment>
<comment type="subcellular location">
    <subcellularLocation>
        <location evidence="9 11 14 17">Recycling endosome membrane</location>
        <topology evidence="22">Peripheral membrane protein</topology>
        <orientation evidence="22">Cytoplasmic side</orientation>
    </subcellularLocation>
    <subcellularLocation>
        <location evidence="9">Early endosome membrane</location>
        <topology evidence="22">Peripheral membrane protein</topology>
        <orientation evidence="22">Cytoplasmic side</orientation>
    </subcellularLocation>
    <subcellularLocation>
        <location evidence="3">Cell membrane</location>
        <topology evidence="22">Peripheral membrane protein</topology>
        <orientation evidence="22">Cytoplasmic side</orientation>
    </subcellularLocation>
    <subcellularLocation>
        <location evidence="19 20">Cell projection</location>
        <location evidence="19 20">Cilium membrane</location>
        <topology evidence="23">Peripheral membrane protein</topology>
        <orientation evidence="22">Cytoplasmic side</orientation>
    </subcellularLocation>
    <text evidence="3 9 11 14 17 19">Preferentially associates with tubular recycling endosomes (PubMed:15020713, PubMed:17233914, PubMed:19864458, PubMed:23596323). Colocalizes with FER1L5 at plasma membrane in myoblasts and myotubes (By similarity). Localizes to the ciliary pocket from where the cilium protrudes (PubMed:25686250). Colocalizes with BACE1 in tubulovesicular cytoplasmic membranes. Colocalizes with BACE1 and APP amyloid beta proteins in hippocampal mossy fiber terminals (By similarity).</text>
</comment>
<comment type="tissue specificity">
    <text evidence="8">Highly expressed in testis.</text>
</comment>
<comment type="domain">
    <text evidence="3">The EH domain interacts with Asn-Pro-Phe (NPF) motifs of target proteins.</text>
</comment>
<comment type="similarity">
    <text evidence="7">Belongs to the TRAFAC class dynamin-like GTPase superfamily. Dynamin/Fzo/YdjA family. EHD subfamily.</text>
</comment>
<proteinExistence type="evidence at protein level"/>
<name>EHD1_HUMAN</name>
<protein>
    <recommendedName>
        <fullName evidence="22">EH domain-containing protein 1</fullName>
    </recommendedName>
    <alternativeName>
        <fullName evidence="21">PAST homolog 1</fullName>
        <shortName evidence="21">hPAST1</shortName>
    </alternativeName>
    <alternativeName>
        <fullName evidence="24">Testilin</fullName>
    </alternativeName>
</protein>
<reference key="1">
    <citation type="journal article" date="1997" name="Genome Res.">
        <title>A transcript map for the 2.8-Mb region containing the multiple endocrine neoplasia type 1 locus.</title>
        <authorList>
            <person name="Guru S.C."/>
            <person name="Agarwal S.K."/>
            <person name="Manickam P."/>
            <person name="Olufemi S.-E."/>
            <person name="Crabtree J.S."/>
            <person name="Weisemann J.M."/>
            <person name="Kester M.B."/>
            <person name="Kim Y.S."/>
            <person name="Wang Y."/>
            <person name="Emmert-Buck M.R."/>
            <person name="Liotta L.A."/>
            <person name="Spiegel A.M."/>
            <person name="Boguski M.S."/>
            <person name="Roe B.A."/>
            <person name="Collins F.S."/>
            <person name="Burns A.L."/>
            <person name="Marx S.J."/>
            <person name="Chandrasekharappa S.C."/>
        </authorList>
    </citation>
    <scope>NUCLEOTIDE SEQUENCE [MRNA]</scope>
</reference>
<reference key="2">
    <citation type="journal article" date="1999" name="Genomics">
        <title>EHD1 -- an EH-domain-containing protein with a specific expression pattern.</title>
        <authorList>
            <person name="Mintz L."/>
            <person name="Galperin E."/>
            <person name="Pasmanik-Chor M."/>
            <person name="Tulzinsky S."/>
            <person name="Bromberg Y."/>
            <person name="Kozak C.A."/>
            <person name="Joyner A."/>
            <person name="Fein A."/>
            <person name="Horowitz M."/>
        </authorList>
    </citation>
    <scope>NUCLEOTIDE SEQUENCE [MRNA]</scope>
    <scope>TISSUE SPECIFICITY</scope>
</reference>
<reference key="3">
    <citation type="submission" date="2000-07" db="EMBL/GenBank/DDBJ databases">
        <title>Pediatric leukemia cDNA sequencing project.</title>
        <authorList>
            <person name="Zhou J."/>
            <person name="Yu W."/>
            <person name="Tang H."/>
            <person name="Mei G."/>
            <person name="Tsang Y.T.M."/>
            <person name="Bouck J."/>
            <person name="Gibbs R.A."/>
            <person name="Margolin J.F."/>
        </authorList>
    </citation>
    <scope>NUCLEOTIDE SEQUENCE [LARGE SCALE MRNA]</scope>
    <source>
        <tissue>Leukemia</tissue>
    </source>
</reference>
<reference key="4">
    <citation type="journal article" date="2004" name="Genome Res.">
        <title>The status, quality, and expansion of the NIH full-length cDNA project: the Mammalian Gene Collection (MGC).</title>
        <authorList>
            <consortium name="The MGC Project Team"/>
        </authorList>
    </citation>
    <scope>NUCLEOTIDE SEQUENCE [LARGE SCALE MRNA]</scope>
    <source>
        <tissue>Brain</tissue>
    </source>
</reference>
<reference key="5">
    <citation type="journal article" date="2003" name="Nat. Biotechnol.">
        <title>Exploring proteomes and analyzing protein processing by mass spectrometric identification of sorted N-terminal peptides.</title>
        <authorList>
            <person name="Gevaert K."/>
            <person name="Goethals M."/>
            <person name="Martens L."/>
            <person name="Van Damme J."/>
            <person name="Staes A."/>
            <person name="Thomas G.R."/>
            <person name="Vandekerckhove J."/>
        </authorList>
    </citation>
    <scope>PROTEIN SEQUENCE OF 1-10</scope>
    <source>
        <tissue>Platelet</tissue>
    </source>
</reference>
<reference key="6">
    <citation type="journal article" date="2004" name="Mol. Biol. Cell">
        <title>Rabenosyn-5 and EHD1 interact and sequentially regulate protein recycling to the plasma membrane.</title>
        <authorList>
            <person name="Naslavsky N."/>
            <person name="Boehm M."/>
            <person name="Backlund P.S. Jr."/>
            <person name="Caplan S."/>
        </authorList>
    </citation>
    <scope>FUNCTION IN ENDOSOMAL RECYCLING</scope>
    <scope>INTERACTION WITH ZFYVE20</scope>
    <scope>SUBCELLULAR LOCATION</scope>
</reference>
<reference key="7">
    <citation type="journal article" date="2005" name="Nat. Biotechnol.">
        <title>Immunoaffinity profiling of tyrosine phosphorylation in cancer cells.</title>
        <authorList>
            <person name="Rush J."/>
            <person name="Moritz A."/>
            <person name="Lee K.A."/>
            <person name="Guo A."/>
            <person name="Goss V.L."/>
            <person name="Spek E.J."/>
            <person name="Zhang H."/>
            <person name="Zha X.-M."/>
            <person name="Polakiewicz R.D."/>
            <person name="Comb M.J."/>
        </authorList>
    </citation>
    <scope>IDENTIFICATION BY MASS SPECTROMETRY [LARGE SCALE ANALYSIS]</scope>
</reference>
<reference key="8">
    <citation type="journal article" date="2006" name="Mol. Biol. Cell">
        <title>Interactions between EHD proteins and Rab11-FIP2: a role for EHD3 in early endosomal transport.</title>
        <authorList>
            <person name="Naslavsky N."/>
            <person name="Rahajeng J."/>
            <person name="Sharma M."/>
            <person name="Jovic M."/>
            <person name="Caplan S."/>
        </authorList>
    </citation>
    <scope>INTERACTION WITH RAB11FIP2</scope>
    <scope>SUBUNIT</scope>
    <scope>ATP-BINDING SITE</scope>
    <scope>MUTAGENESIS OF GLY-65; VAL-203 AND TRP-485</scope>
</reference>
<reference key="9">
    <citation type="journal article" date="2007" name="BMC Cell Biol.">
        <title>Shared as well as distinct roles of EHD proteins revealed by biochemical and functional comparisons in mammalian cells and C. elegans.</title>
        <authorList>
            <person name="George M."/>
            <person name="Ying G."/>
            <person name="Rainey M.A."/>
            <person name="Solomon A."/>
            <person name="Parikh P.T."/>
            <person name="Gao Q."/>
            <person name="Band V."/>
            <person name="Band H."/>
        </authorList>
    </citation>
    <scope>FUNCTION</scope>
    <scope>SUBCELLULAR LOCATION</scope>
    <scope>SUBUNIT</scope>
</reference>
<reference key="10">
    <citation type="journal article" date="2008" name="Mol. Cell">
        <title>Kinase-selective enrichment enables quantitative phosphoproteomics of the kinome across the cell cycle.</title>
        <authorList>
            <person name="Daub H."/>
            <person name="Olsen J.V."/>
            <person name="Bairlein M."/>
            <person name="Gnad F."/>
            <person name="Oppermann F.S."/>
            <person name="Korner R."/>
            <person name="Greff Z."/>
            <person name="Keri G."/>
            <person name="Stemmann O."/>
            <person name="Mann M."/>
        </authorList>
    </citation>
    <scope>IDENTIFICATION BY MASS SPECTROMETRY [LARGE SCALE ANALYSIS]</scope>
    <source>
        <tissue>Cervix carcinoma</tissue>
    </source>
</reference>
<reference key="11">
    <citation type="journal article" date="2008" name="Proc. Natl. Acad. Sci. U.S.A.">
        <title>A quantitative atlas of mitotic phosphorylation.</title>
        <authorList>
            <person name="Dephoure N."/>
            <person name="Zhou C."/>
            <person name="Villen J."/>
            <person name="Beausoleil S.A."/>
            <person name="Bakalarski C.E."/>
            <person name="Elledge S.J."/>
            <person name="Gygi S.P."/>
        </authorList>
    </citation>
    <scope>PHOSPHORYLATION [LARGE SCALE ANALYSIS] AT SER-456</scope>
    <scope>IDENTIFICATION BY MASS SPECTROMETRY [LARGE SCALE ANALYSIS]</scope>
    <source>
        <tissue>Cervix carcinoma</tissue>
    </source>
</reference>
<reference key="12">
    <citation type="journal article" date="2008" name="Traffic">
        <title>A role for EHD4 in the regulation of early endosomal transport.</title>
        <authorList>
            <person name="Sharma M."/>
            <person name="Naslavsky N."/>
            <person name="Caplan S."/>
        </authorList>
    </citation>
    <scope>INTERACTION WITH EHD4</scope>
</reference>
<reference key="13">
    <citation type="journal article" date="2009" name="Mol. Biol. Cell">
        <title>MICAL-L1 links EHD1 to tubular recycling endosomes and regulates receptor recycling.</title>
        <authorList>
            <person name="Sharma M."/>
            <person name="Giridharan S.S."/>
            <person name="Rahajeng J."/>
            <person name="Naslavsky N."/>
            <person name="Caplan S."/>
        </authorList>
    </citation>
    <scope>INTERACTION WITH MICALL1 AND RAB8A</scope>
    <scope>SUBCELLULAR LOCATION</scope>
    <scope>MUTAGENESIS OF LYS-483 AND TRP-485</scope>
</reference>
<reference key="14">
    <citation type="journal article" date="2009" name="Sci. Signal.">
        <title>Quantitative phosphoproteomic analysis of T cell receptor signaling reveals system-wide modulation of protein-protein interactions.</title>
        <authorList>
            <person name="Mayya V."/>
            <person name="Lundgren D.H."/>
            <person name="Hwang S.-I."/>
            <person name="Rezaul K."/>
            <person name="Wu L."/>
            <person name="Eng J.K."/>
            <person name="Rodionov V."/>
            <person name="Han D.K."/>
        </authorList>
    </citation>
    <scope>PHOSPHORYLATION [LARGE SCALE ANALYSIS] AT SER-456</scope>
    <scope>IDENTIFICATION BY MASS SPECTROMETRY [LARGE SCALE ANALYSIS]</scope>
    <source>
        <tissue>Leukemic T-cell</tissue>
    </source>
</reference>
<reference key="15">
    <citation type="journal article" date="2010" name="J. Biol. Chem.">
        <title>Collapsin response mediator protein-2 (Crmp2) regulates trafficking by linking endocytic regulatory proteins to dynein motors.</title>
        <authorList>
            <person name="Rahajeng J."/>
            <person name="Giridharan S.S."/>
            <person name="Naslavsky N."/>
            <person name="Caplan S."/>
        </authorList>
    </citation>
    <scope>FUNCTION IN ENDOCYTOSIS</scope>
</reference>
<reference key="16">
    <citation type="journal article" date="2010" name="Sci. Signal.">
        <title>Quantitative phosphoproteomics reveals widespread full phosphorylation site occupancy during mitosis.</title>
        <authorList>
            <person name="Olsen J.V."/>
            <person name="Vermeulen M."/>
            <person name="Santamaria A."/>
            <person name="Kumar C."/>
            <person name="Miller M.L."/>
            <person name="Jensen L.J."/>
            <person name="Gnad F."/>
            <person name="Cox J."/>
            <person name="Jensen T.S."/>
            <person name="Nigg E.A."/>
            <person name="Brunak S."/>
            <person name="Mann M."/>
        </authorList>
    </citation>
    <scope>PHOSPHORYLATION [LARGE SCALE ANALYSIS] AT SER-456</scope>
    <scope>IDENTIFICATION BY MASS SPECTROMETRY [LARGE SCALE ANALYSIS]</scope>
    <source>
        <tissue>Cervix carcinoma</tissue>
    </source>
</reference>
<reference key="17">
    <citation type="journal article" date="2011" name="BMC Syst. Biol.">
        <title>Initial characterization of the human central proteome.</title>
        <authorList>
            <person name="Burkard T.R."/>
            <person name="Planyavsky M."/>
            <person name="Kaupe I."/>
            <person name="Breitwieser F.P."/>
            <person name="Buerckstuemmer T."/>
            <person name="Bennett K.L."/>
            <person name="Superti-Furga G."/>
            <person name="Colinge J."/>
        </authorList>
    </citation>
    <scope>IDENTIFICATION BY MASS SPECTROMETRY [LARGE SCALE ANALYSIS]</scope>
</reference>
<reference key="18">
    <citation type="journal article" date="2011" name="Sci. Signal.">
        <title>System-wide temporal characterization of the proteome and phosphoproteome of human embryonic stem cell differentiation.</title>
        <authorList>
            <person name="Rigbolt K.T."/>
            <person name="Prokhorova T.A."/>
            <person name="Akimov V."/>
            <person name="Henningsen J."/>
            <person name="Johansen P.T."/>
            <person name="Kratchmarova I."/>
            <person name="Kassem M."/>
            <person name="Mann M."/>
            <person name="Olsen J.V."/>
            <person name="Blagoev B."/>
        </authorList>
    </citation>
    <scope>PHOSPHORYLATION [LARGE SCALE ANALYSIS] AT SER-456</scope>
    <scope>IDENTIFICATION BY MASS SPECTROMETRY [LARGE SCALE ANALYSIS]</scope>
</reference>
<reference key="19">
    <citation type="journal article" date="2012" name="Proc. Natl. Acad. Sci. U.S.A.">
        <title>N-terminal acetylome analyses and functional insights of the N-terminal acetyltransferase NatB.</title>
        <authorList>
            <person name="Van Damme P."/>
            <person name="Lasa M."/>
            <person name="Polevoda B."/>
            <person name="Gazquez C."/>
            <person name="Elosegui-Artola A."/>
            <person name="Kim D.S."/>
            <person name="De Juan-Pardo E."/>
            <person name="Demeyer K."/>
            <person name="Hole K."/>
            <person name="Larrea E."/>
            <person name="Timmerman E."/>
            <person name="Prieto J."/>
            <person name="Arnesen T."/>
            <person name="Sherman F."/>
            <person name="Gevaert K."/>
            <person name="Aldabe R."/>
        </authorList>
    </citation>
    <scope>ACETYLATION [LARGE SCALE ANALYSIS] AT MET-1</scope>
    <scope>IDENTIFICATION BY MASS SPECTROMETRY [LARGE SCALE ANALYSIS]</scope>
</reference>
<reference key="20">
    <citation type="journal article" date="2013" name="J. Biol. Chem.">
        <title>Differential roles of C-terminal Eps15 homology domain proteins as vesiculators and tubulators of recycling endosomes.</title>
        <authorList>
            <person name="Cai B."/>
            <person name="Giridharan S.S."/>
            <person name="Zhang J."/>
            <person name="Saxena S."/>
            <person name="Bahl K."/>
            <person name="Schmidt J.A."/>
            <person name="Sorgen P.L."/>
            <person name="Guo W."/>
            <person name="Naslavsky N."/>
            <person name="Caplan S."/>
        </authorList>
    </citation>
    <scope>FUNCTION</scope>
</reference>
<reference key="21">
    <citation type="journal article" date="2013" name="J. Proteome Res.">
        <title>Toward a comprehensive characterization of a human cancer cell phosphoproteome.</title>
        <authorList>
            <person name="Zhou H."/>
            <person name="Di Palma S."/>
            <person name="Preisinger C."/>
            <person name="Peng M."/>
            <person name="Polat A.N."/>
            <person name="Heck A.J."/>
            <person name="Mohammed S."/>
        </authorList>
    </citation>
    <scope>PHOSPHORYLATION [LARGE SCALE ANALYSIS] AT SER-355 AND SER-456</scope>
    <scope>IDENTIFICATION BY MASS SPECTROMETRY [LARGE SCALE ANALYSIS]</scope>
    <source>
        <tissue>Cervix carcinoma</tissue>
        <tissue>Erythroleukemia</tissue>
    </source>
</reference>
<reference key="22">
    <citation type="journal article" date="2013" name="Mol. Biol. Cell">
        <title>Cooperation of MICAL-L1, syndapin2, and phosphatidic acid in tubular recycling endosome biogenesis.</title>
        <authorList>
            <person name="Giridharan S.S."/>
            <person name="Cai B."/>
            <person name="Vitale N."/>
            <person name="Naslavsky N."/>
            <person name="Caplan S."/>
        </authorList>
    </citation>
    <scope>INTERACTION WITH PACSIN2</scope>
    <scope>SUBCELLULAR LOCATION</scope>
</reference>
<reference key="23">
    <citation type="journal article" date="2014" name="J. Proteomics">
        <title>An enzyme assisted RP-RPLC approach for in-depth analysis of human liver phosphoproteome.</title>
        <authorList>
            <person name="Bian Y."/>
            <person name="Song C."/>
            <person name="Cheng K."/>
            <person name="Dong M."/>
            <person name="Wang F."/>
            <person name="Huang J."/>
            <person name="Sun D."/>
            <person name="Wang L."/>
            <person name="Ye M."/>
            <person name="Zou H."/>
        </authorList>
    </citation>
    <scope>PHOSPHORYLATION [LARGE SCALE ANALYSIS] AT SER-355</scope>
    <scope>IDENTIFICATION BY MASS SPECTROMETRY [LARGE SCALE ANALYSIS]</scope>
    <source>
        <tissue>Liver</tissue>
    </source>
</reference>
<reference key="24">
    <citation type="journal article" date="2015" name="Nat. Cell Biol.">
        <title>Early steps in primary cilium assembly require EHD1/EHD3-dependent ciliary vesicle formation.</title>
        <authorList>
            <person name="Lu Q."/>
            <person name="Insinna C."/>
            <person name="Ott C."/>
            <person name="Stauffer J."/>
            <person name="Pintado P.A."/>
            <person name="Rahajeng J."/>
            <person name="Baxa U."/>
            <person name="Walia V."/>
            <person name="Cuenca A."/>
            <person name="Hwang Y.S."/>
            <person name="Daar I.O."/>
            <person name="Lopes S."/>
            <person name="Lippincott-Schwartz J."/>
            <person name="Jackson P.K."/>
            <person name="Caplan S."/>
            <person name="Westlake C.J."/>
        </authorList>
    </citation>
    <scope>FUNCTION</scope>
    <scope>SUBCELLULAR LOCATION</scope>
    <scope>MUTAGENESIS OF LYS-483 AND TRP-485</scope>
</reference>
<reference key="25">
    <citation type="journal article" date="2015" name="Nat. Cell Biol.">
        <authorList>
            <person name="Lu Q."/>
            <person name="Insinna C."/>
            <person name="Ott C."/>
            <person name="Stauffer J."/>
            <person name="Pintado P.A."/>
            <person name="Rahajeng J."/>
            <person name="Baxa U."/>
            <person name="Walia V."/>
            <person name="Cuenca A."/>
            <person name="Hwang Y.S."/>
            <person name="Daar I.O."/>
            <person name="Lopes S."/>
            <person name="Lippincott-Schwartz J."/>
            <person name="Jackson P.K."/>
            <person name="Caplan S."/>
            <person name="Westlake C.J."/>
        </authorList>
    </citation>
    <scope>ERRATUM OF PUBMED:25686250</scope>
</reference>
<reference key="26">
    <citation type="journal article" date="2015" name="Proteomics">
        <title>N-terminome analysis of the human mitochondrial proteome.</title>
        <authorList>
            <person name="Vaca Jacome A.S."/>
            <person name="Rabilloud T."/>
            <person name="Schaeffer-Reiss C."/>
            <person name="Rompais M."/>
            <person name="Ayoub D."/>
            <person name="Lane L."/>
            <person name="Bairoch A."/>
            <person name="Van Dorsselaer A."/>
            <person name="Carapito C."/>
        </authorList>
    </citation>
    <scope>IDENTIFICATION BY MASS SPECTROMETRY [LARGE SCALE ANALYSIS]</scope>
</reference>
<reference key="27">
    <citation type="journal article" date="2019" name="J. Cell Sci.">
        <title>MICAL-L1 coordinates ciliogenesis by recruiting EHD1 to the primary cilium.</title>
        <authorList>
            <person name="Xie S."/>
            <person name="Farmer T."/>
            <person name="Naslavsky N."/>
            <person name="Caplan S."/>
        </authorList>
    </citation>
    <scope>FUNCTION</scope>
    <scope>SUBCELLULAR LOCATION</scope>
    <scope>INTERACTION WITH MICALL1</scope>
</reference>
<reference key="28">
    <citation type="journal article" date="2010" name="J. Biol. Chem.">
        <title>Mechanism for the selective interaction of C-terminal Eps15 homology domain proteins with specific Asn-Pro-Phe-containing partners.</title>
        <authorList>
            <person name="Kieken F."/>
            <person name="Sharma M."/>
            <person name="Jovic M."/>
            <person name="Giridharan S.S."/>
            <person name="Naslavsky N."/>
            <person name="Caplan S."/>
            <person name="Sorgen P.L."/>
        </authorList>
    </citation>
    <scope>STRUCTURE BY NMR OF 435-534 IN COMPLEX WITH MICALL1 PEPTIDE</scope>
    <scope>MUTAGENESIS OF LYS-468</scope>
</reference>
<reference key="29">
    <citation type="journal article" date="2007" name="J. Biomol. NMR">
        <title>EH domain of EHD1.</title>
        <authorList>
            <person name="Kieken F."/>
            <person name="Jovic M."/>
            <person name="Naslavsky N."/>
            <person name="Caplan S."/>
            <person name="Sorgen P.L."/>
        </authorList>
    </citation>
    <scope>STRUCTURE BY NMR OF 401-534 IN COMPLEX WITH CALCIUM IONS</scope>
</reference>
<feature type="chain" id="PRO_0000146109" description="EH domain-containing protein 1">
    <location>
        <begin position="1"/>
        <end position="534"/>
    </location>
</feature>
<feature type="domain" description="Dynamin-type G" evidence="7">
    <location>
        <begin position="55"/>
        <end position="286"/>
    </location>
</feature>
<feature type="domain" description="EH" evidence="5">
    <location>
        <begin position="444"/>
        <end position="532"/>
    </location>
</feature>
<feature type="domain" description="EF-hand" evidence="6">
    <location>
        <begin position="476"/>
        <end position="511"/>
    </location>
</feature>
<feature type="region of interest" description="G1 motif" evidence="7">
    <location>
        <begin position="65"/>
        <end position="72"/>
    </location>
</feature>
<feature type="region of interest" description="G2 motif" evidence="7">
    <location>
        <begin position="91"/>
        <end position="92"/>
    </location>
</feature>
<feature type="region of interest" description="G3 motif" evidence="7">
    <location>
        <begin position="153"/>
        <end position="156"/>
    </location>
</feature>
<feature type="region of interest" description="G4 motif" evidence="7">
    <location>
        <begin position="219"/>
        <end position="222"/>
    </location>
</feature>
<feature type="region of interest" description="G5 motif" evidence="7">
    <location>
        <position position="243"/>
    </location>
</feature>
<feature type="coiled-coil region" evidence="4">
    <location>
        <begin position="198"/>
        <end position="227"/>
    </location>
</feature>
<feature type="binding site" evidence="10">
    <location>
        <begin position="65"/>
        <end position="72"/>
    </location>
    <ligand>
        <name>ATP</name>
        <dbReference type="ChEBI" id="CHEBI:30616"/>
    </ligand>
</feature>
<feature type="binding site" evidence="2">
    <location>
        <position position="220"/>
    </location>
    <ligand>
        <name>ATP</name>
        <dbReference type="ChEBI" id="CHEBI:30616"/>
    </ligand>
</feature>
<feature type="binding site" evidence="2">
    <location>
        <position position="258"/>
    </location>
    <ligand>
        <name>ATP</name>
        <dbReference type="ChEBI" id="CHEBI:30616"/>
    </ligand>
</feature>
<feature type="binding site" evidence="6 12 26 27">
    <location>
        <position position="489"/>
    </location>
    <ligand>
        <name>Ca(2+)</name>
        <dbReference type="ChEBI" id="CHEBI:29108"/>
    </ligand>
</feature>
<feature type="binding site" evidence="6 12 26 27">
    <location>
        <position position="491"/>
    </location>
    <ligand>
        <name>Ca(2+)</name>
        <dbReference type="ChEBI" id="CHEBI:29108"/>
    </ligand>
</feature>
<feature type="binding site" evidence="6 12 26 27">
    <location>
        <position position="493"/>
    </location>
    <ligand>
        <name>Ca(2+)</name>
        <dbReference type="ChEBI" id="CHEBI:29108"/>
    </ligand>
</feature>
<feature type="binding site" evidence="6 12 26 27">
    <location>
        <position position="500"/>
    </location>
    <ligand>
        <name>Ca(2+)</name>
        <dbReference type="ChEBI" id="CHEBI:29108"/>
    </ligand>
</feature>
<feature type="modified residue" description="N-acetylmethionine" evidence="32">
    <location>
        <position position="1"/>
    </location>
</feature>
<feature type="modified residue" description="Phosphoserine" evidence="33 34">
    <location>
        <position position="355"/>
    </location>
</feature>
<feature type="modified residue" description="Phosphoserine" evidence="28 29 30 31 33">
    <location>
        <position position="456"/>
    </location>
</feature>
<feature type="mutagenesis site" description="Abolishes ATP-binding and localizes to cytoplasm." evidence="10">
    <original>G</original>
    <variation>R</variation>
    <location>
        <position position="65"/>
    </location>
</feature>
<feature type="mutagenesis site" description="Greatly reduces oligomerization and interaction with RAB11FIP2." evidence="10">
    <original>V</original>
    <variation>P</variation>
    <location>
        <position position="203"/>
    </location>
</feature>
<feature type="mutagenesis site" description="Loss of interaction with MICALL1." evidence="15">
    <original>K</original>
    <variation>A</variation>
    <location>
        <position position="468"/>
    </location>
</feature>
<feature type="mutagenesis site" description="Loss of accumulation at the ciliary pocket. Loss of function in ciliogenesis. Loss of association with tubulovesicular structures and altered MICALL1 localization. No effect on MICALL1 localization; when associated with A-485." evidence="14 19">
    <original>K</original>
    <variation>E</variation>
    <location>
        <position position="483"/>
    </location>
</feature>
<feature type="mutagenesis site" description="Loss of accumulation at the ciliary pocket. Loss of function in ciliogenesis. Abolishes interaction with RAB11FIP2. No effect on MICALL1 localization; when associated with E-483." evidence="10 14 19">
    <original>W</original>
    <variation>A</variation>
    <location>
        <position position="485"/>
    </location>
</feature>
<feature type="sequence conflict" description="In Ref. 2; AAD45866." evidence="22" ref="2">
    <original>A</original>
    <variation>R</variation>
    <location>
        <position position="127"/>
    </location>
</feature>
<feature type="sequence conflict" description="In Ref. 2; AAD45866." evidence="22" ref="2">
    <original>ERV</original>
    <variation>DCW</variation>
    <location>
        <begin position="180"/>
        <end position="182"/>
    </location>
</feature>
<feature type="sequence conflict" description="In Ref. 2; AAD45866." evidence="22" ref="2">
    <original>L</original>
    <variation>Q</variation>
    <location>
        <position position="194"/>
    </location>
</feature>
<feature type="sequence conflict" description="In Ref. 2; AAD45866." evidence="22" ref="2">
    <original>D</original>
    <variation>H</variation>
    <location>
        <position position="198"/>
    </location>
</feature>
<feature type="sequence conflict" description="In Ref. 2; AAD45866." evidence="22" ref="2">
    <original>V</original>
    <variation>M</variation>
    <location>
        <position position="216"/>
    </location>
</feature>
<feature type="sequence conflict" description="In Ref. 1; AAB81204." evidence="22" ref="1">
    <original>D</original>
    <variation>H</variation>
    <location>
        <position position="435"/>
    </location>
</feature>
<feature type="sequence conflict" description="In Ref. 2; AAD45866." evidence="22" ref="2">
    <original>T</original>
    <variation>S</variation>
    <location>
        <position position="447"/>
    </location>
</feature>
<feature type="sequence conflict" description="In Ref. 2; AAD45866." evidence="22" ref="2">
    <original>A</original>
    <variation>V</variation>
    <location>
        <position position="467"/>
    </location>
</feature>
<feature type="sequence conflict" description="In Ref. 2; AAD45866." evidence="22" ref="2">
    <original>V</original>
    <variation>E</variation>
    <location>
        <position position="480"/>
    </location>
</feature>
<feature type="sequence conflict" description="In Ref. 3; AAG02009." evidence="22" ref="3">
    <original>KRRHE</original>
    <variation>SAWGH</variation>
    <location>
        <begin position="530"/>
        <end position="534"/>
    </location>
</feature>
<feature type="helix" evidence="35">
    <location>
        <begin position="440"/>
        <end position="443"/>
    </location>
</feature>
<feature type="helix" evidence="35">
    <location>
        <begin position="445"/>
        <end position="454"/>
    </location>
</feature>
<feature type="strand" evidence="35">
    <location>
        <begin position="458"/>
        <end position="463"/>
    </location>
</feature>
<feature type="helix" evidence="35">
    <location>
        <begin position="464"/>
        <end position="473"/>
    </location>
</feature>
<feature type="helix" evidence="35">
    <location>
        <begin position="478"/>
        <end position="488"/>
    </location>
</feature>
<feature type="strand" evidence="35">
    <location>
        <begin position="494"/>
        <end position="497"/>
    </location>
</feature>
<feature type="helix" evidence="35">
    <location>
        <begin position="498"/>
        <end position="512"/>
    </location>
</feature>
<feature type="turn" evidence="36">
    <location>
        <begin position="523"/>
        <end position="525"/>
    </location>
</feature>
<feature type="helix" evidence="35">
    <location>
        <begin position="528"/>
        <end position="530"/>
    </location>
</feature>
<gene>
    <name evidence="25" type="primary">EHD1</name>
    <name evidence="21" type="synonym">PAST</name>
    <name evidence="25" type="synonym">PAST1</name>
    <name type="ORF">CDABP0131</name>
</gene>
<organism>
    <name type="scientific">Homo sapiens</name>
    <name type="common">Human</name>
    <dbReference type="NCBI Taxonomy" id="9606"/>
    <lineage>
        <taxon>Eukaryota</taxon>
        <taxon>Metazoa</taxon>
        <taxon>Chordata</taxon>
        <taxon>Craniata</taxon>
        <taxon>Vertebrata</taxon>
        <taxon>Euteleostomi</taxon>
        <taxon>Mammalia</taxon>
        <taxon>Eutheria</taxon>
        <taxon>Euarchontoglires</taxon>
        <taxon>Primates</taxon>
        <taxon>Haplorrhini</taxon>
        <taxon>Catarrhini</taxon>
        <taxon>Hominidae</taxon>
        <taxon>Homo</taxon>
    </lineage>
</organism>
<accession>Q9H4M9</accession>
<accession>O14611</accession>
<accession>Q2M3Q4</accession>
<accession>Q9UNR3</accession>
<sequence>MFSWVSKDARRKKEPELFQTVAEGLRQLYAQKLLPLEEHYRFHEFHSPALEDADFDNKPMVLLVGQYSTGKTTFIRHLIEQDFPGMRIGPEPTTDSFIAVMHGPTEGVVPGNALVVDPRRPFRKLNAFGNAFLNRFMCAQLPNPVLDSISIIDTPGILSGEKQRISRGYDFAAVLEWFAERVDRIILLFDAHKLDISDEFSEVIKALKNHEDKIRVVLNKADQIETQQLMRVYGALMWSLGKIINTPEVVRVYIGSFWSHPLLIPDNRKLFEAEEQDLFKDIQSLPRNAALRKLNDLIKRARLAKVHAYIISSLKKEMPNVFGKESKKKELVNNLGEIYQKIEREHQISPGDFPSLRKMQELLQTQDFSKFQALKPKLLDTVDDMLANDIARLMVMVRQEESLMPSQVVKGGAFDGTMNGPFGHGYGEGAGEGIDDVEWVVGKDKPTYDEIFYTLSPVNGKITGANAKKEMVKSKLPNTVLGKIWKLADVDKDGLLDDEEFALANHLIKVKLEGHELPADLPPHLVPPSKRRHE</sequence>